<keyword id="KW-0021">Allosteric enzyme</keyword>
<keyword id="KW-0963">Cytoplasm</keyword>
<keyword id="KW-0378">Hydrolase</keyword>
<keyword id="KW-0479">Metal-binding</keyword>
<keyword id="KW-0645">Protease</keyword>
<keyword id="KW-0915">Sodium</keyword>
<keyword id="KW-0888">Threonine protease</keyword>
<protein>
    <recommendedName>
        <fullName evidence="1">ATP-dependent protease subunit HslV</fullName>
        <ecNumber evidence="1">3.4.25.2</ecNumber>
    </recommendedName>
</protein>
<accession>B5RLC2</accession>
<gene>
    <name evidence="1" type="primary">hslV</name>
    <name type="ordered locus">BDU_299</name>
</gene>
<name>HSLV_BORDL</name>
<feature type="chain" id="PRO_1000100871" description="ATP-dependent protease subunit HslV">
    <location>
        <begin position="1"/>
        <end position="180"/>
    </location>
</feature>
<feature type="active site" evidence="1">
    <location>
        <position position="6"/>
    </location>
</feature>
<feature type="binding site" evidence="1">
    <location>
        <position position="164"/>
    </location>
    <ligand>
        <name>Na(+)</name>
        <dbReference type="ChEBI" id="CHEBI:29101"/>
    </ligand>
</feature>
<feature type="binding site" evidence="1">
    <location>
        <position position="167"/>
    </location>
    <ligand>
        <name>Na(+)</name>
        <dbReference type="ChEBI" id="CHEBI:29101"/>
    </ligand>
</feature>
<feature type="binding site" evidence="1">
    <location>
        <position position="170"/>
    </location>
    <ligand>
        <name>Na(+)</name>
        <dbReference type="ChEBI" id="CHEBI:29101"/>
    </ligand>
</feature>
<dbReference type="EC" id="3.4.25.2" evidence="1"/>
<dbReference type="EMBL" id="CP000976">
    <property type="protein sequence ID" value="ACH93251.1"/>
    <property type="molecule type" value="Genomic_DNA"/>
</dbReference>
<dbReference type="RefSeq" id="WP_012538062.1">
    <property type="nucleotide sequence ID" value="NC_011229.1"/>
</dbReference>
<dbReference type="SMR" id="B5RLC2"/>
<dbReference type="STRING" id="412419.BDU_299"/>
<dbReference type="KEGG" id="bdu:BDU_299"/>
<dbReference type="eggNOG" id="COG5405">
    <property type="taxonomic scope" value="Bacteria"/>
</dbReference>
<dbReference type="HOGENOM" id="CLU_093872_1_0_12"/>
<dbReference type="OrthoDB" id="9804884at2"/>
<dbReference type="Proteomes" id="UP000000611">
    <property type="component" value="Chromosome"/>
</dbReference>
<dbReference type="GO" id="GO:0009376">
    <property type="term" value="C:HslUV protease complex"/>
    <property type="evidence" value="ECO:0007669"/>
    <property type="project" value="UniProtKB-UniRule"/>
</dbReference>
<dbReference type="GO" id="GO:0005839">
    <property type="term" value="C:proteasome core complex"/>
    <property type="evidence" value="ECO:0007669"/>
    <property type="project" value="InterPro"/>
</dbReference>
<dbReference type="GO" id="GO:0046872">
    <property type="term" value="F:metal ion binding"/>
    <property type="evidence" value="ECO:0007669"/>
    <property type="project" value="UniProtKB-KW"/>
</dbReference>
<dbReference type="GO" id="GO:0004298">
    <property type="term" value="F:threonine-type endopeptidase activity"/>
    <property type="evidence" value="ECO:0007669"/>
    <property type="project" value="UniProtKB-KW"/>
</dbReference>
<dbReference type="GO" id="GO:0051603">
    <property type="term" value="P:proteolysis involved in protein catabolic process"/>
    <property type="evidence" value="ECO:0007669"/>
    <property type="project" value="InterPro"/>
</dbReference>
<dbReference type="CDD" id="cd01913">
    <property type="entry name" value="protease_HslV"/>
    <property type="match status" value="1"/>
</dbReference>
<dbReference type="Gene3D" id="3.60.20.10">
    <property type="entry name" value="Glutamine Phosphoribosylpyrophosphate, subunit 1, domain 1"/>
    <property type="match status" value="1"/>
</dbReference>
<dbReference type="HAMAP" id="MF_00248">
    <property type="entry name" value="HslV"/>
    <property type="match status" value="1"/>
</dbReference>
<dbReference type="InterPro" id="IPR022281">
    <property type="entry name" value="ATP-dep_Prtase_HsIV_su"/>
</dbReference>
<dbReference type="InterPro" id="IPR029055">
    <property type="entry name" value="Ntn_hydrolases_N"/>
</dbReference>
<dbReference type="InterPro" id="IPR001353">
    <property type="entry name" value="Proteasome_sua/b"/>
</dbReference>
<dbReference type="InterPro" id="IPR023333">
    <property type="entry name" value="Proteasome_suB-type"/>
</dbReference>
<dbReference type="NCBIfam" id="TIGR03692">
    <property type="entry name" value="ATP_dep_HslV"/>
    <property type="match status" value="1"/>
</dbReference>
<dbReference type="NCBIfam" id="NF003964">
    <property type="entry name" value="PRK05456.1"/>
    <property type="match status" value="1"/>
</dbReference>
<dbReference type="PANTHER" id="PTHR32194:SF0">
    <property type="entry name" value="ATP-DEPENDENT PROTEASE SUBUNIT HSLV"/>
    <property type="match status" value="1"/>
</dbReference>
<dbReference type="PANTHER" id="PTHR32194">
    <property type="entry name" value="METALLOPROTEASE TLDD"/>
    <property type="match status" value="1"/>
</dbReference>
<dbReference type="Pfam" id="PF00227">
    <property type="entry name" value="Proteasome"/>
    <property type="match status" value="1"/>
</dbReference>
<dbReference type="PIRSF" id="PIRSF039093">
    <property type="entry name" value="HslV"/>
    <property type="match status" value="1"/>
</dbReference>
<dbReference type="SUPFAM" id="SSF56235">
    <property type="entry name" value="N-terminal nucleophile aminohydrolases (Ntn hydrolases)"/>
    <property type="match status" value="1"/>
</dbReference>
<dbReference type="PROSITE" id="PS51476">
    <property type="entry name" value="PROTEASOME_BETA_2"/>
    <property type="match status" value="1"/>
</dbReference>
<sequence>MNFKGTTVIAIRRAGKTVVAADGQVTFGYTVLKSNAVKIRKLVNGKILAGFAGSTSDAITLFEKFEEKVKSREDGIIDIKRAAVDLAKDWRSDKILHKLEAMMLVADSDNILLISGTGDVVEPEEDVISIGSGGNYAYSAALAYMENKKLSAADIAFKALKIAARVCIYTNSNIVLEEIG</sequence>
<reference key="1">
    <citation type="journal article" date="2008" name="PLoS Genet.">
        <title>The genome of Borrelia recurrentis, the agent of deadly louse-borne relapsing fever, is a degraded subset of tick-borne Borrelia duttonii.</title>
        <authorList>
            <person name="Lescot M."/>
            <person name="Audic S."/>
            <person name="Robert C."/>
            <person name="Nguyen T.T."/>
            <person name="Blanc G."/>
            <person name="Cutler S.J."/>
            <person name="Wincker P."/>
            <person name="Couloux A."/>
            <person name="Claverie J.-M."/>
            <person name="Raoult D."/>
            <person name="Drancourt M."/>
        </authorList>
    </citation>
    <scope>NUCLEOTIDE SEQUENCE [LARGE SCALE GENOMIC DNA]</scope>
    <source>
        <strain>Ly</strain>
    </source>
</reference>
<organism>
    <name type="scientific">Borrelia duttonii (strain Ly)</name>
    <dbReference type="NCBI Taxonomy" id="412419"/>
    <lineage>
        <taxon>Bacteria</taxon>
        <taxon>Pseudomonadati</taxon>
        <taxon>Spirochaetota</taxon>
        <taxon>Spirochaetia</taxon>
        <taxon>Spirochaetales</taxon>
        <taxon>Borreliaceae</taxon>
        <taxon>Borrelia</taxon>
    </lineage>
</organism>
<proteinExistence type="inferred from homology"/>
<comment type="function">
    <text evidence="1">Protease subunit of a proteasome-like degradation complex believed to be a general protein degrading machinery.</text>
</comment>
<comment type="catalytic activity">
    <reaction evidence="1">
        <text>ATP-dependent cleavage of peptide bonds with broad specificity.</text>
        <dbReference type="EC" id="3.4.25.2"/>
    </reaction>
</comment>
<comment type="activity regulation">
    <text evidence="1">Allosterically activated by HslU binding.</text>
</comment>
<comment type="subunit">
    <text evidence="1">A double ring-shaped homohexamer of HslV is capped on each side by a ring-shaped HslU homohexamer. The assembly of the HslU/HslV complex is dependent on binding of ATP.</text>
</comment>
<comment type="subcellular location">
    <subcellularLocation>
        <location evidence="1">Cytoplasm</location>
    </subcellularLocation>
</comment>
<comment type="similarity">
    <text evidence="1">Belongs to the peptidase T1B family. HslV subfamily.</text>
</comment>
<evidence type="ECO:0000255" key="1">
    <source>
        <dbReference type="HAMAP-Rule" id="MF_00248"/>
    </source>
</evidence>